<keyword id="KW-0028">Amino-acid biosynthesis</keyword>
<keyword id="KW-0055">Arginine biosynthesis</keyword>
<keyword id="KW-0067">ATP-binding</keyword>
<keyword id="KW-0315">Glutamine amidotransferase</keyword>
<keyword id="KW-0436">Ligase</keyword>
<keyword id="KW-0547">Nucleotide-binding</keyword>
<keyword id="KW-0665">Pyrimidine biosynthesis</keyword>
<keyword id="KW-1185">Reference proteome</keyword>
<comment type="function">
    <text evidence="1">Small subunit of the glutamine-dependent carbamoyl phosphate synthetase (CPSase). CPSase catalyzes the formation of carbamoyl phosphate from the ammonia moiety of glutamine, carbonate, and phosphate donated by ATP, constituting the first step of 2 biosynthetic pathways, one leading to arginine and/or urea and the other to pyrimidine nucleotides. The small subunit (glutamine amidotransferase) binds and cleaves glutamine to supply the large subunit with the substrate ammonia.</text>
</comment>
<comment type="catalytic activity">
    <reaction evidence="1">
        <text>hydrogencarbonate + L-glutamine + 2 ATP + H2O = carbamoyl phosphate + L-glutamate + 2 ADP + phosphate + 2 H(+)</text>
        <dbReference type="Rhea" id="RHEA:18633"/>
        <dbReference type="ChEBI" id="CHEBI:15377"/>
        <dbReference type="ChEBI" id="CHEBI:15378"/>
        <dbReference type="ChEBI" id="CHEBI:17544"/>
        <dbReference type="ChEBI" id="CHEBI:29985"/>
        <dbReference type="ChEBI" id="CHEBI:30616"/>
        <dbReference type="ChEBI" id="CHEBI:43474"/>
        <dbReference type="ChEBI" id="CHEBI:58228"/>
        <dbReference type="ChEBI" id="CHEBI:58359"/>
        <dbReference type="ChEBI" id="CHEBI:456216"/>
        <dbReference type="EC" id="6.3.5.5"/>
    </reaction>
</comment>
<comment type="catalytic activity">
    <molecule>Carbamoyl phosphate synthase small chain</molecule>
    <reaction evidence="1">
        <text>L-glutamine + H2O = L-glutamate + NH4(+)</text>
        <dbReference type="Rhea" id="RHEA:15889"/>
        <dbReference type="ChEBI" id="CHEBI:15377"/>
        <dbReference type="ChEBI" id="CHEBI:28938"/>
        <dbReference type="ChEBI" id="CHEBI:29985"/>
        <dbReference type="ChEBI" id="CHEBI:58359"/>
    </reaction>
</comment>
<comment type="pathway">
    <text evidence="1">Amino-acid biosynthesis; L-arginine biosynthesis; carbamoyl phosphate from bicarbonate: step 1/1.</text>
</comment>
<comment type="pathway">
    <text evidence="1">Pyrimidine metabolism; UMP biosynthesis via de novo pathway; (S)-dihydroorotate from bicarbonate: step 1/3.</text>
</comment>
<comment type="subunit">
    <text evidence="1">Composed of two chains; the small (or glutamine) chain promotes the hydrolysis of glutamine to ammonia, which is used by the large (or ammonia) chain to synthesize carbamoyl phosphate. Tetramer of heterodimers (alpha,beta)4.</text>
</comment>
<comment type="similarity">
    <text evidence="1">Belongs to the CarA family.</text>
</comment>
<dbReference type="EC" id="6.3.5.5" evidence="1"/>
<dbReference type="EMBL" id="AE017143">
    <property type="protein sequence ID" value="AAP95221.1"/>
    <property type="molecule type" value="Genomic_DNA"/>
</dbReference>
<dbReference type="RefSeq" id="WP_010944274.1">
    <property type="nucleotide sequence ID" value="NC_002940.2"/>
</dbReference>
<dbReference type="SMR" id="Q7VP66"/>
<dbReference type="STRING" id="233412.HD_0235"/>
<dbReference type="KEGG" id="hdu:HD_0235"/>
<dbReference type="eggNOG" id="COG0505">
    <property type="taxonomic scope" value="Bacteria"/>
</dbReference>
<dbReference type="HOGENOM" id="CLU_035901_2_1_6"/>
<dbReference type="OrthoDB" id="9804328at2"/>
<dbReference type="UniPathway" id="UPA00068">
    <property type="reaction ID" value="UER00171"/>
</dbReference>
<dbReference type="UniPathway" id="UPA00070">
    <property type="reaction ID" value="UER00115"/>
</dbReference>
<dbReference type="Proteomes" id="UP000001022">
    <property type="component" value="Chromosome"/>
</dbReference>
<dbReference type="GO" id="GO:0005524">
    <property type="term" value="F:ATP binding"/>
    <property type="evidence" value="ECO:0007669"/>
    <property type="project" value="UniProtKB-UniRule"/>
</dbReference>
<dbReference type="GO" id="GO:0004088">
    <property type="term" value="F:carbamoyl-phosphate synthase (glutamine-hydrolyzing) activity"/>
    <property type="evidence" value="ECO:0007669"/>
    <property type="project" value="UniProtKB-UniRule"/>
</dbReference>
<dbReference type="GO" id="GO:0004359">
    <property type="term" value="F:glutaminase activity"/>
    <property type="evidence" value="ECO:0007669"/>
    <property type="project" value="RHEA"/>
</dbReference>
<dbReference type="GO" id="GO:0006207">
    <property type="term" value="P:'de novo' pyrimidine nucleobase biosynthetic process"/>
    <property type="evidence" value="ECO:0007669"/>
    <property type="project" value="InterPro"/>
</dbReference>
<dbReference type="GO" id="GO:0044205">
    <property type="term" value="P:'de novo' UMP biosynthetic process"/>
    <property type="evidence" value="ECO:0007669"/>
    <property type="project" value="UniProtKB-UniRule"/>
</dbReference>
<dbReference type="GO" id="GO:0006541">
    <property type="term" value="P:glutamine metabolic process"/>
    <property type="evidence" value="ECO:0007669"/>
    <property type="project" value="InterPro"/>
</dbReference>
<dbReference type="GO" id="GO:0006526">
    <property type="term" value="P:L-arginine biosynthetic process"/>
    <property type="evidence" value="ECO:0007669"/>
    <property type="project" value="UniProtKB-UniRule"/>
</dbReference>
<dbReference type="CDD" id="cd01744">
    <property type="entry name" value="GATase1_CPSase"/>
    <property type="match status" value="1"/>
</dbReference>
<dbReference type="FunFam" id="3.40.50.880:FF:000011">
    <property type="entry name" value="Carbamoyl-phosphate synthase small chain"/>
    <property type="match status" value="1"/>
</dbReference>
<dbReference type="FunFam" id="3.50.30.20:FF:000001">
    <property type="entry name" value="Carbamoyl-phosphate synthase small chain"/>
    <property type="match status" value="1"/>
</dbReference>
<dbReference type="Gene3D" id="3.40.50.880">
    <property type="match status" value="1"/>
</dbReference>
<dbReference type="Gene3D" id="3.50.30.20">
    <property type="entry name" value="Carbamoyl-phosphate synthase small subunit, N-terminal domain"/>
    <property type="match status" value="1"/>
</dbReference>
<dbReference type="HAMAP" id="MF_01209">
    <property type="entry name" value="CPSase_S_chain"/>
    <property type="match status" value="1"/>
</dbReference>
<dbReference type="InterPro" id="IPR050472">
    <property type="entry name" value="Anth_synth/Amidotransfase"/>
</dbReference>
<dbReference type="InterPro" id="IPR006274">
    <property type="entry name" value="CarbamoylP_synth_ssu"/>
</dbReference>
<dbReference type="InterPro" id="IPR002474">
    <property type="entry name" value="CarbamoylP_synth_ssu_N"/>
</dbReference>
<dbReference type="InterPro" id="IPR036480">
    <property type="entry name" value="CarbP_synth_ssu_N_sf"/>
</dbReference>
<dbReference type="InterPro" id="IPR029062">
    <property type="entry name" value="Class_I_gatase-like"/>
</dbReference>
<dbReference type="InterPro" id="IPR035686">
    <property type="entry name" value="CPSase_GATase1"/>
</dbReference>
<dbReference type="InterPro" id="IPR017926">
    <property type="entry name" value="GATASE"/>
</dbReference>
<dbReference type="NCBIfam" id="TIGR01368">
    <property type="entry name" value="CPSaseIIsmall"/>
    <property type="match status" value="1"/>
</dbReference>
<dbReference type="NCBIfam" id="NF009475">
    <property type="entry name" value="PRK12838.1"/>
    <property type="match status" value="1"/>
</dbReference>
<dbReference type="PANTHER" id="PTHR43418:SF7">
    <property type="entry name" value="CARBAMOYL-PHOSPHATE SYNTHASE SMALL CHAIN"/>
    <property type="match status" value="1"/>
</dbReference>
<dbReference type="PANTHER" id="PTHR43418">
    <property type="entry name" value="MULTIFUNCTIONAL TRYPTOPHAN BIOSYNTHESIS PROTEIN-RELATED"/>
    <property type="match status" value="1"/>
</dbReference>
<dbReference type="Pfam" id="PF00988">
    <property type="entry name" value="CPSase_sm_chain"/>
    <property type="match status" value="1"/>
</dbReference>
<dbReference type="Pfam" id="PF00117">
    <property type="entry name" value="GATase"/>
    <property type="match status" value="1"/>
</dbReference>
<dbReference type="PRINTS" id="PR00099">
    <property type="entry name" value="CPSGATASE"/>
</dbReference>
<dbReference type="PRINTS" id="PR00096">
    <property type="entry name" value="GATASE"/>
</dbReference>
<dbReference type="SMART" id="SM01097">
    <property type="entry name" value="CPSase_sm_chain"/>
    <property type="match status" value="1"/>
</dbReference>
<dbReference type="SUPFAM" id="SSF52021">
    <property type="entry name" value="Carbamoyl phosphate synthetase, small subunit N-terminal domain"/>
    <property type="match status" value="1"/>
</dbReference>
<dbReference type="SUPFAM" id="SSF52317">
    <property type="entry name" value="Class I glutamine amidotransferase-like"/>
    <property type="match status" value="1"/>
</dbReference>
<dbReference type="PROSITE" id="PS51273">
    <property type="entry name" value="GATASE_TYPE_1"/>
    <property type="match status" value="1"/>
</dbReference>
<gene>
    <name evidence="1" type="primary">carA</name>
    <name type="ordered locus">HD_0235</name>
</gene>
<reference key="1">
    <citation type="submission" date="2003-06" db="EMBL/GenBank/DDBJ databases">
        <title>The complete genome sequence of Haemophilus ducreyi.</title>
        <authorList>
            <person name="Munson R.S. Jr."/>
            <person name="Ray W.C."/>
            <person name="Mahairas G."/>
            <person name="Sabo P."/>
            <person name="Mungur R."/>
            <person name="Johnson L."/>
            <person name="Nguyen D."/>
            <person name="Wang J."/>
            <person name="Forst C."/>
            <person name="Hood L."/>
        </authorList>
    </citation>
    <scope>NUCLEOTIDE SEQUENCE [LARGE SCALE GENOMIC DNA]</scope>
    <source>
        <strain>35000HP / ATCC 700724</strain>
    </source>
</reference>
<evidence type="ECO:0000255" key="1">
    <source>
        <dbReference type="HAMAP-Rule" id="MF_01209"/>
    </source>
</evidence>
<sequence>MFNPAILVLADGSTFYGKSIGYQAVSAYSIGEVVFNTAMTGYQEILTDPSYAKQIVTLTYPHIGNTGTNDEDNESNQIYASGLIIRDLPLLHSNFRATSSLSDYLIQHNIIAIADIDTRRLTRILRETGSQAGCIYIPNENESLAQAVEKAQDLAKSFGSMAGKDLAKEVTCQHRYEWQEGIWHLPTNNAGKPFNLQTTPTFHVVAYDFGIKQNILRMLAERGCKITVVPAQTSAEDILALNPDGIFLSNGPGDPEPCTYAIQSIRQLLNTQKPIFGICLGHQLLGLAVGAKTRKMAFGHHGANHPVQDLKTEHVLITSQNHGFEIDEYSLPENVIVTHRSLFDNSVQGIELTNQVAFSFQGHPEANPGPQDVAYLFDKFINAVQATKA</sequence>
<protein>
    <recommendedName>
        <fullName evidence="1">Carbamoyl phosphate synthase small chain</fullName>
        <ecNumber evidence="1">6.3.5.5</ecNumber>
    </recommendedName>
    <alternativeName>
        <fullName evidence="1">Carbamoyl phosphate synthetase glutamine chain</fullName>
    </alternativeName>
</protein>
<organism>
    <name type="scientific">Haemophilus ducreyi (strain 35000HP / ATCC 700724)</name>
    <dbReference type="NCBI Taxonomy" id="233412"/>
    <lineage>
        <taxon>Bacteria</taxon>
        <taxon>Pseudomonadati</taxon>
        <taxon>Pseudomonadota</taxon>
        <taxon>Gammaproteobacteria</taxon>
        <taxon>Pasteurellales</taxon>
        <taxon>Pasteurellaceae</taxon>
        <taxon>Haemophilus</taxon>
    </lineage>
</organism>
<accession>Q7VP66</accession>
<feature type="chain" id="PRO_0000112279" description="Carbamoyl phosphate synthase small chain">
    <location>
        <begin position="1"/>
        <end position="389"/>
    </location>
</feature>
<feature type="domain" description="Glutamine amidotransferase type-1" evidence="1">
    <location>
        <begin position="203"/>
        <end position="389"/>
    </location>
</feature>
<feature type="region of interest" description="CPSase" evidence="1">
    <location>
        <begin position="1"/>
        <end position="199"/>
    </location>
</feature>
<feature type="active site" description="Nucleophile" evidence="1">
    <location>
        <position position="279"/>
    </location>
</feature>
<feature type="active site" evidence="1">
    <location>
        <position position="363"/>
    </location>
</feature>
<feature type="active site" evidence="1">
    <location>
        <position position="365"/>
    </location>
</feature>
<feature type="binding site" evidence="1">
    <location>
        <position position="50"/>
    </location>
    <ligand>
        <name>L-glutamine</name>
        <dbReference type="ChEBI" id="CHEBI:58359"/>
    </ligand>
</feature>
<feature type="binding site" evidence="1">
    <location>
        <position position="251"/>
    </location>
    <ligand>
        <name>L-glutamine</name>
        <dbReference type="ChEBI" id="CHEBI:58359"/>
    </ligand>
</feature>
<feature type="binding site" evidence="1">
    <location>
        <position position="253"/>
    </location>
    <ligand>
        <name>L-glutamine</name>
        <dbReference type="ChEBI" id="CHEBI:58359"/>
    </ligand>
</feature>
<feature type="binding site" evidence="1">
    <location>
        <position position="280"/>
    </location>
    <ligand>
        <name>L-glutamine</name>
        <dbReference type="ChEBI" id="CHEBI:58359"/>
    </ligand>
</feature>
<feature type="binding site" evidence="1">
    <location>
        <position position="283"/>
    </location>
    <ligand>
        <name>L-glutamine</name>
        <dbReference type="ChEBI" id="CHEBI:58359"/>
    </ligand>
</feature>
<feature type="binding site" evidence="1">
    <location>
        <position position="321"/>
    </location>
    <ligand>
        <name>L-glutamine</name>
        <dbReference type="ChEBI" id="CHEBI:58359"/>
    </ligand>
</feature>
<feature type="binding site" evidence="1">
    <location>
        <position position="323"/>
    </location>
    <ligand>
        <name>L-glutamine</name>
        <dbReference type="ChEBI" id="CHEBI:58359"/>
    </ligand>
</feature>
<feature type="binding site" evidence="1">
    <location>
        <position position="324"/>
    </location>
    <ligand>
        <name>L-glutamine</name>
        <dbReference type="ChEBI" id="CHEBI:58359"/>
    </ligand>
</feature>
<name>CARA_HAEDU</name>
<proteinExistence type="inferred from homology"/>